<gene>
    <name evidence="1" type="primary">secA</name>
    <name type="ordered locus">CLM_0221</name>
</gene>
<organism>
    <name type="scientific">Clostridium botulinum (strain Kyoto / Type A2)</name>
    <dbReference type="NCBI Taxonomy" id="536232"/>
    <lineage>
        <taxon>Bacteria</taxon>
        <taxon>Bacillati</taxon>
        <taxon>Bacillota</taxon>
        <taxon>Clostridia</taxon>
        <taxon>Eubacteriales</taxon>
        <taxon>Clostridiaceae</taxon>
        <taxon>Clostridium</taxon>
    </lineage>
</organism>
<keyword id="KW-0067">ATP-binding</keyword>
<keyword id="KW-1003">Cell membrane</keyword>
<keyword id="KW-0963">Cytoplasm</keyword>
<keyword id="KW-0472">Membrane</keyword>
<keyword id="KW-0479">Metal-binding</keyword>
<keyword id="KW-0547">Nucleotide-binding</keyword>
<keyword id="KW-0653">Protein transport</keyword>
<keyword id="KW-1278">Translocase</keyword>
<keyword id="KW-0811">Translocation</keyword>
<keyword id="KW-0813">Transport</keyword>
<keyword id="KW-0862">Zinc</keyword>
<comment type="function">
    <text evidence="1">Part of the Sec protein translocase complex. Interacts with the SecYEG preprotein conducting channel. Has a central role in coupling the hydrolysis of ATP to the transfer of proteins into and across the cell membrane, serving as an ATP-driven molecular motor driving the stepwise translocation of polypeptide chains across the membrane.</text>
</comment>
<comment type="catalytic activity">
    <reaction evidence="1">
        <text>ATP + H2O + cellular proteinSide 1 = ADP + phosphate + cellular proteinSide 2.</text>
        <dbReference type="EC" id="7.4.2.8"/>
    </reaction>
</comment>
<comment type="cofactor">
    <cofactor evidence="1">
        <name>Zn(2+)</name>
        <dbReference type="ChEBI" id="CHEBI:29105"/>
    </cofactor>
    <text evidence="1">May bind 1 zinc ion per subunit.</text>
</comment>
<comment type="subunit">
    <text evidence="1">Monomer and homodimer. Part of the essential Sec protein translocation apparatus which comprises SecA, SecYEG and auxiliary proteins SecDF. Other proteins may also be involved.</text>
</comment>
<comment type="subcellular location">
    <subcellularLocation>
        <location evidence="1">Cell membrane</location>
        <topology evidence="1">Peripheral membrane protein</topology>
        <orientation evidence="1">Cytoplasmic side</orientation>
    </subcellularLocation>
    <subcellularLocation>
        <location evidence="1">Cytoplasm</location>
    </subcellularLocation>
    <text evidence="1">Distribution is 50-50.</text>
</comment>
<comment type="similarity">
    <text evidence="1">Belongs to the SecA family.</text>
</comment>
<accession>C1FQR0</accession>
<sequence length="835" mass="95583">MGILNKIFGTYSERELRRVNPIVNKIEALDEKMQSLKDEDFKLKTEEFKSRLEKGEKLDDILPEAFALVREAAHRTIGLKHYREQLIGGVVLHQGRIGEMKTGEGKTLVATLPAYVNALTGKGVHIVTVNDYLAKRDRDLMAPVYEFLGLKVGVILHNLNNEERQEAYGSDITYGTNSEFGFDYLRDNMVVYKEERVQRKLNFSIVDEVDSILIDEARTPLIISGQGEKSTEFYKVADYFTKSLIAEKDFTIDEKANSAMLTDEGVNKAENFFKVDNYADAENMEIQHHVVQALKANYVMKKDKDYMIKDGEILIVDEFTGRAMEGRRYSDGLHQAIEAKEGVRVERESKTLATITYQNYFRMYNKLSGMTGTAQTEENEFREIYGLDVIVIPTHEPIARIDNADVVYKSEKGKFKAIVDEIVERYKKGQPMLVGTVSIEKSEMLSSMLKKKGVPHQVLNAKYHEKEAEIISHAGEYGMVTIATNMAGRGTDIKLTKEAEEAGGLMIIGTERHESRRIDNQLRGRSGRQGDPGESRFFVSLEDDLMRIFGSERIQGIVDKLGLAEDEAIESKMVSSAIESAQKKVEGNNFDIRKTLLQYDDVINKQREIIYKQRSEVLEGEDLKDQIRDMIRDVVYTAVNSHISGVEEEFETELQNLVNYLEDICLPKALVKVKDISNLSDEEIKEKLLEAVENIYSRKEKEIGEEQIREIERVILLRVVDTKWMDHIDDMDHLKQGIGLRAYRQQDPVQAYQFEGSEMFEEMIYNIKVDTVRYLFHVEVEKAPEREKVAKETSTNYDEDSVKKQPIKKENRIGRNDMCPCGSGKKYKNCCGRMA</sequence>
<evidence type="ECO:0000255" key="1">
    <source>
        <dbReference type="HAMAP-Rule" id="MF_01382"/>
    </source>
</evidence>
<reference key="1">
    <citation type="submission" date="2008-10" db="EMBL/GenBank/DDBJ databases">
        <title>Genome sequence of Clostridium botulinum A2 Kyoto.</title>
        <authorList>
            <person name="Shrivastava S."/>
            <person name="Brinkac L.M."/>
            <person name="Brown J.L."/>
            <person name="Bruce D."/>
            <person name="Detter C.C."/>
            <person name="Johnson E.A."/>
            <person name="Munk C.A."/>
            <person name="Smith L.A."/>
            <person name="Smith T.J."/>
            <person name="Sutton G."/>
            <person name="Brettin T.S."/>
        </authorList>
    </citation>
    <scope>NUCLEOTIDE SEQUENCE [LARGE SCALE GENOMIC DNA]</scope>
    <source>
        <strain>Kyoto / Type A2</strain>
    </source>
</reference>
<name>SECA_CLOBJ</name>
<proteinExistence type="inferred from homology"/>
<protein>
    <recommendedName>
        <fullName evidence="1">Protein translocase subunit SecA</fullName>
        <ecNumber evidence="1">7.4.2.8</ecNumber>
    </recommendedName>
</protein>
<feature type="chain" id="PRO_1000184222" description="Protein translocase subunit SecA">
    <location>
        <begin position="1"/>
        <end position="835"/>
    </location>
</feature>
<feature type="binding site" evidence="1">
    <location>
        <position position="85"/>
    </location>
    <ligand>
        <name>ATP</name>
        <dbReference type="ChEBI" id="CHEBI:30616"/>
    </ligand>
</feature>
<feature type="binding site" evidence="1">
    <location>
        <begin position="103"/>
        <end position="107"/>
    </location>
    <ligand>
        <name>ATP</name>
        <dbReference type="ChEBI" id="CHEBI:30616"/>
    </ligand>
</feature>
<feature type="binding site" evidence="1">
    <location>
        <position position="492"/>
    </location>
    <ligand>
        <name>ATP</name>
        <dbReference type="ChEBI" id="CHEBI:30616"/>
    </ligand>
</feature>
<feature type="binding site" evidence="1">
    <location>
        <position position="819"/>
    </location>
    <ligand>
        <name>Zn(2+)</name>
        <dbReference type="ChEBI" id="CHEBI:29105"/>
    </ligand>
</feature>
<feature type="binding site" evidence="1">
    <location>
        <position position="821"/>
    </location>
    <ligand>
        <name>Zn(2+)</name>
        <dbReference type="ChEBI" id="CHEBI:29105"/>
    </ligand>
</feature>
<feature type="binding site" evidence="1">
    <location>
        <position position="830"/>
    </location>
    <ligand>
        <name>Zn(2+)</name>
        <dbReference type="ChEBI" id="CHEBI:29105"/>
    </ligand>
</feature>
<feature type="binding site" evidence="1">
    <location>
        <position position="831"/>
    </location>
    <ligand>
        <name>Zn(2+)</name>
        <dbReference type="ChEBI" id="CHEBI:29105"/>
    </ligand>
</feature>
<dbReference type="EC" id="7.4.2.8" evidence="1"/>
<dbReference type="EMBL" id="CP001581">
    <property type="protein sequence ID" value="ACO86487.1"/>
    <property type="molecule type" value="Genomic_DNA"/>
</dbReference>
<dbReference type="RefSeq" id="WP_012705344.1">
    <property type="nucleotide sequence ID" value="NC_012563.1"/>
</dbReference>
<dbReference type="SMR" id="C1FQR0"/>
<dbReference type="KEGG" id="cby:CLM_0221"/>
<dbReference type="eggNOG" id="COG0653">
    <property type="taxonomic scope" value="Bacteria"/>
</dbReference>
<dbReference type="HOGENOM" id="CLU_005314_3_0_9"/>
<dbReference type="Proteomes" id="UP000001374">
    <property type="component" value="Chromosome"/>
</dbReference>
<dbReference type="GO" id="GO:0031522">
    <property type="term" value="C:cell envelope Sec protein transport complex"/>
    <property type="evidence" value="ECO:0007669"/>
    <property type="project" value="TreeGrafter"/>
</dbReference>
<dbReference type="GO" id="GO:0005829">
    <property type="term" value="C:cytosol"/>
    <property type="evidence" value="ECO:0007669"/>
    <property type="project" value="TreeGrafter"/>
</dbReference>
<dbReference type="GO" id="GO:0005886">
    <property type="term" value="C:plasma membrane"/>
    <property type="evidence" value="ECO:0007669"/>
    <property type="project" value="UniProtKB-SubCell"/>
</dbReference>
<dbReference type="GO" id="GO:0005524">
    <property type="term" value="F:ATP binding"/>
    <property type="evidence" value="ECO:0007669"/>
    <property type="project" value="UniProtKB-UniRule"/>
</dbReference>
<dbReference type="GO" id="GO:0046872">
    <property type="term" value="F:metal ion binding"/>
    <property type="evidence" value="ECO:0007669"/>
    <property type="project" value="UniProtKB-KW"/>
</dbReference>
<dbReference type="GO" id="GO:0008564">
    <property type="term" value="F:protein-exporting ATPase activity"/>
    <property type="evidence" value="ECO:0007669"/>
    <property type="project" value="UniProtKB-EC"/>
</dbReference>
<dbReference type="GO" id="GO:0065002">
    <property type="term" value="P:intracellular protein transmembrane transport"/>
    <property type="evidence" value="ECO:0007669"/>
    <property type="project" value="UniProtKB-UniRule"/>
</dbReference>
<dbReference type="GO" id="GO:0017038">
    <property type="term" value="P:protein import"/>
    <property type="evidence" value="ECO:0007669"/>
    <property type="project" value="InterPro"/>
</dbReference>
<dbReference type="GO" id="GO:0006605">
    <property type="term" value="P:protein targeting"/>
    <property type="evidence" value="ECO:0007669"/>
    <property type="project" value="UniProtKB-UniRule"/>
</dbReference>
<dbReference type="GO" id="GO:0043952">
    <property type="term" value="P:protein transport by the Sec complex"/>
    <property type="evidence" value="ECO:0007669"/>
    <property type="project" value="TreeGrafter"/>
</dbReference>
<dbReference type="CDD" id="cd17928">
    <property type="entry name" value="DEXDc_SecA"/>
    <property type="match status" value="1"/>
</dbReference>
<dbReference type="CDD" id="cd18803">
    <property type="entry name" value="SF2_C_secA"/>
    <property type="match status" value="1"/>
</dbReference>
<dbReference type="FunFam" id="1.10.3060.10:FF:000002">
    <property type="entry name" value="Preprotein translocase subunit SecA"/>
    <property type="match status" value="1"/>
</dbReference>
<dbReference type="FunFam" id="3.40.50.300:FF:000694">
    <property type="entry name" value="Preprotein translocase subunit SecA"/>
    <property type="match status" value="1"/>
</dbReference>
<dbReference type="FunFam" id="3.90.1440.10:FF:000001">
    <property type="entry name" value="Preprotein translocase subunit SecA"/>
    <property type="match status" value="1"/>
</dbReference>
<dbReference type="Gene3D" id="1.10.3060.10">
    <property type="entry name" value="Helical scaffold and wing domains of SecA"/>
    <property type="match status" value="1"/>
</dbReference>
<dbReference type="Gene3D" id="3.40.50.300">
    <property type="entry name" value="P-loop containing nucleotide triphosphate hydrolases"/>
    <property type="match status" value="3"/>
</dbReference>
<dbReference type="Gene3D" id="3.90.1440.10">
    <property type="entry name" value="SecA, preprotein cross-linking domain"/>
    <property type="match status" value="1"/>
</dbReference>
<dbReference type="HAMAP" id="MF_01382">
    <property type="entry name" value="SecA"/>
    <property type="match status" value="1"/>
</dbReference>
<dbReference type="InterPro" id="IPR014001">
    <property type="entry name" value="Helicase_ATP-bd"/>
</dbReference>
<dbReference type="InterPro" id="IPR001650">
    <property type="entry name" value="Helicase_C-like"/>
</dbReference>
<dbReference type="InterPro" id="IPR027417">
    <property type="entry name" value="P-loop_NTPase"/>
</dbReference>
<dbReference type="InterPro" id="IPR004027">
    <property type="entry name" value="SEC_C_motif"/>
</dbReference>
<dbReference type="InterPro" id="IPR000185">
    <property type="entry name" value="SecA"/>
</dbReference>
<dbReference type="InterPro" id="IPR020937">
    <property type="entry name" value="SecA_CS"/>
</dbReference>
<dbReference type="InterPro" id="IPR011115">
    <property type="entry name" value="SecA_DEAD"/>
</dbReference>
<dbReference type="InterPro" id="IPR014018">
    <property type="entry name" value="SecA_motor_DEAD"/>
</dbReference>
<dbReference type="InterPro" id="IPR011130">
    <property type="entry name" value="SecA_preprotein_X-link_dom"/>
</dbReference>
<dbReference type="InterPro" id="IPR044722">
    <property type="entry name" value="SecA_SF2_C"/>
</dbReference>
<dbReference type="InterPro" id="IPR011116">
    <property type="entry name" value="SecA_Wing/Scaffold"/>
</dbReference>
<dbReference type="InterPro" id="IPR036266">
    <property type="entry name" value="SecA_Wing/Scaffold_sf"/>
</dbReference>
<dbReference type="InterPro" id="IPR036670">
    <property type="entry name" value="SecA_X-link_sf"/>
</dbReference>
<dbReference type="NCBIfam" id="NF006630">
    <property type="entry name" value="PRK09200.1"/>
    <property type="match status" value="1"/>
</dbReference>
<dbReference type="NCBIfam" id="NF009538">
    <property type="entry name" value="PRK12904.1"/>
    <property type="match status" value="1"/>
</dbReference>
<dbReference type="NCBIfam" id="TIGR00963">
    <property type="entry name" value="secA"/>
    <property type="match status" value="1"/>
</dbReference>
<dbReference type="PANTHER" id="PTHR30612:SF0">
    <property type="entry name" value="CHLOROPLAST PROTEIN-TRANSPORTING ATPASE"/>
    <property type="match status" value="1"/>
</dbReference>
<dbReference type="PANTHER" id="PTHR30612">
    <property type="entry name" value="SECA INNER MEMBRANE COMPONENT OF SEC PROTEIN SECRETION SYSTEM"/>
    <property type="match status" value="1"/>
</dbReference>
<dbReference type="Pfam" id="PF21090">
    <property type="entry name" value="P-loop_SecA"/>
    <property type="match status" value="1"/>
</dbReference>
<dbReference type="Pfam" id="PF02810">
    <property type="entry name" value="SEC-C"/>
    <property type="match status" value="1"/>
</dbReference>
<dbReference type="Pfam" id="PF07517">
    <property type="entry name" value="SecA_DEAD"/>
    <property type="match status" value="1"/>
</dbReference>
<dbReference type="Pfam" id="PF01043">
    <property type="entry name" value="SecA_PP_bind"/>
    <property type="match status" value="1"/>
</dbReference>
<dbReference type="Pfam" id="PF07516">
    <property type="entry name" value="SecA_SW"/>
    <property type="match status" value="1"/>
</dbReference>
<dbReference type="PRINTS" id="PR00906">
    <property type="entry name" value="SECA"/>
</dbReference>
<dbReference type="SMART" id="SM00957">
    <property type="entry name" value="SecA_DEAD"/>
    <property type="match status" value="1"/>
</dbReference>
<dbReference type="SMART" id="SM00958">
    <property type="entry name" value="SecA_PP_bind"/>
    <property type="match status" value="1"/>
</dbReference>
<dbReference type="SUPFAM" id="SSF81886">
    <property type="entry name" value="Helical scaffold and wing domains of SecA"/>
    <property type="match status" value="1"/>
</dbReference>
<dbReference type="SUPFAM" id="SSF52540">
    <property type="entry name" value="P-loop containing nucleoside triphosphate hydrolases"/>
    <property type="match status" value="2"/>
</dbReference>
<dbReference type="SUPFAM" id="SSF81767">
    <property type="entry name" value="Pre-protein crosslinking domain of SecA"/>
    <property type="match status" value="1"/>
</dbReference>
<dbReference type="PROSITE" id="PS01312">
    <property type="entry name" value="SECA"/>
    <property type="match status" value="1"/>
</dbReference>
<dbReference type="PROSITE" id="PS51196">
    <property type="entry name" value="SECA_MOTOR_DEAD"/>
    <property type="match status" value="1"/>
</dbReference>